<accession>B5ER76</accession>
<proteinExistence type="inferred from homology"/>
<organism>
    <name type="scientific">Acidithiobacillus ferrooxidans (strain ATCC 53993 / BNL-5-31)</name>
    <name type="common">Leptospirillum ferrooxidans (ATCC 53993)</name>
    <dbReference type="NCBI Taxonomy" id="380394"/>
    <lineage>
        <taxon>Bacteria</taxon>
        <taxon>Pseudomonadati</taxon>
        <taxon>Pseudomonadota</taxon>
        <taxon>Acidithiobacillia</taxon>
        <taxon>Acidithiobacillales</taxon>
        <taxon>Acidithiobacillaceae</taxon>
        <taxon>Acidithiobacillus</taxon>
    </lineage>
</organism>
<protein>
    <recommendedName>
        <fullName evidence="1">Nitrogenase iron protein</fullName>
        <ecNumber evidence="1">1.18.6.1</ecNumber>
    </recommendedName>
    <alternativeName>
        <fullName evidence="1">Nitrogenase Fe protein</fullName>
    </alternativeName>
    <alternativeName>
        <fullName evidence="1">Nitrogenase component II</fullName>
    </alternativeName>
    <alternativeName>
        <fullName evidence="1">Nitrogenase reductase</fullName>
    </alternativeName>
</protein>
<name>NIFH_ACIF5</name>
<dbReference type="EC" id="1.18.6.1" evidence="1"/>
<dbReference type="EMBL" id="CP001132">
    <property type="protein sequence ID" value="ACH83478.1"/>
    <property type="molecule type" value="Genomic_DNA"/>
</dbReference>
<dbReference type="RefSeq" id="WP_009567494.1">
    <property type="nucleotide sequence ID" value="NC_011206.1"/>
</dbReference>
<dbReference type="SMR" id="B5ER76"/>
<dbReference type="GeneID" id="65280741"/>
<dbReference type="KEGG" id="afe:Lferr_1240"/>
<dbReference type="eggNOG" id="COG1348">
    <property type="taxonomic scope" value="Bacteria"/>
</dbReference>
<dbReference type="HOGENOM" id="CLU_059373_0_0_6"/>
<dbReference type="GO" id="GO:0051539">
    <property type="term" value="F:4 iron, 4 sulfur cluster binding"/>
    <property type="evidence" value="ECO:0007669"/>
    <property type="project" value="UniProtKB-KW"/>
</dbReference>
<dbReference type="GO" id="GO:0005524">
    <property type="term" value="F:ATP binding"/>
    <property type="evidence" value="ECO:0007669"/>
    <property type="project" value="UniProtKB-UniRule"/>
</dbReference>
<dbReference type="GO" id="GO:0046872">
    <property type="term" value="F:metal ion binding"/>
    <property type="evidence" value="ECO:0007669"/>
    <property type="project" value="UniProtKB-KW"/>
</dbReference>
<dbReference type="GO" id="GO:0016163">
    <property type="term" value="F:nitrogenase activity"/>
    <property type="evidence" value="ECO:0007669"/>
    <property type="project" value="UniProtKB-UniRule"/>
</dbReference>
<dbReference type="GO" id="GO:0009399">
    <property type="term" value="P:nitrogen fixation"/>
    <property type="evidence" value="ECO:0007669"/>
    <property type="project" value="UniProtKB-UniRule"/>
</dbReference>
<dbReference type="CDD" id="cd02040">
    <property type="entry name" value="NifH"/>
    <property type="match status" value="1"/>
</dbReference>
<dbReference type="FunFam" id="3.40.50.300:FF:001379">
    <property type="entry name" value="Nitrogenase iron protein 1"/>
    <property type="match status" value="1"/>
</dbReference>
<dbReference type="Gene3D" id="3.40.50.300">
    <property type="entry name" value="P-loop containing nucleotide triphosphate hydrolases"/>
    <property type="match status" value="1"/>
</dbReference>
<dbReference type="HAMAP" id="MF_00533">
    <property type="entry name" value="NifH"/>
    <property type="match status" value="1"/>
</dbReference>
<dbReference type="InterPro" id="IPR030655">
    <property type="entry name" value="NifH/chlL_CS"/>
</dbReference>
<dbReference type="InterPro" id="IPR000392">
    <property type="entry name" value="NifH/frxC"/>
</dbReference>
<dbReference type="InterPro" id="IPR005977">
    <property type="entry name" value="Nitrogenase_Fe_NifH"/>
</dbReference>
<dbReference type="InterPro" id="IPR027417">
    <property type="entry name" value="P-loop_NTPase"/>
</dbReference>
<dbReference type="NCBIfam" id="TIGR01287">
    <property type="entry name" value="nifH"/>
    <property type="match status" value="1"/>
</dbReference>
<dbReference type="PANTHER" id="PTHR42864">
    <property type="entry name" value="LIGHT-INDEPENDENT PROTOCHLOROPHYLLIDE REDUCTASE IRON-SULFUR ATP-BINDING PROTEIN"/>
    <property type="match status" value="1"/>
</dbReference>
<dbReference type="PANTHER" id="PTHR42864:SF2">
    <property type="entry name" value="LIGHT-INDEPENDENT PROTOCHLOROPHYLLIDE REDUCTASE IRON-SULFUR ATP-BINDING PROTEIN"/>
    <property type="match status" value="1"/>
</dbReference>
<dbReference type="Pfam" id="PF00142">
    <property type="entry name" value="Fer4_NifH"/>
    <property type="match status" value="1"/>
</dbReference>
<dbReference type="PIRSF" id="PIRSF000363">
    <property type="entry name" value="Nitrogenase_iron"/>
    <property type="match status" value="1"/>
</dbReference>
<dbReference type="PRINTS" id="PR00091">
    <property type="entry name" value="NITROGNASEII"/>
</dbReference>
<dbReference type="SUPFAM" id="SSF52540">
    <property type="entry name" value="P-loop containing nucleoside triphosphate hydrolases"/>
    <property type="match status" value="1"/>
</dbReference>
<dbReference type="PROSITE" id="PS00746">
    <property type="entry name" value="NIFH_FRXC_1"/>
    <property type="match status" value="1"/>
</dbReference>
<dbReference type="PROSITE" id="PS00692">
    <property type="entry name" value="NIFH_FRXC_2"/>
    <property type="match status" value="1"/>
</dbReference>
<dbReference type="PROSITE" id="PS51026">
    <property type="entry name" value="NIFH_FRXC_3"/>
    <property type="match status" value="1"/>
</dbReference>
<comment type="function">
    <text evidence="1">The key enzymatic reactions in nitrogen fixation are catalyzed by the nitrogenase complex, which has 2 components: the iron protein and the molybdenum-iron protein.</text>
</comment>
<comment type="catalytic activity">
    <reaction evidence="1">
        <text>N2 + 8 reduced [2Fe-2S]-[ferredoxin] + 16 ATP + 16 H2O = H2 + 8 oxidized [2Fe-2S]-[ferredoxin] + 2 NH4(+) + 16 ADP + 16 phosphate + 6 H(+)</text>
        <dbReference type="Rhea" id="RHEA:21448"/>
        <dbReference type="Rhea" id="RHEA-COMP:10000"/>
        <dbReference type="Rhea" id="RHEA-COMP:10001"/>
        <dbReference type="ChEBI" id="CHEBI:15377"/>
        <dbReference type="ChEBI" id="CHEBI:15378"/>
        <dbReference type="ChEBI" id="CHEBI:17997"/>
        <dbReference type="ChEBI" id="CHEBI:18276"/>
        <dbReference type="ChEBI" id="CHEBI:28938"/>
        <dbReference type="ChEBI" id="CHEBI:30616"/>
        <dbReference type="ChEBI" id="CHEBI:33737"/>
        <dbReference type="ChEBI" id="CHEBI:33738"/>
        <dbReference type="ChEBI" id="CHEBI:43474"/>
        <dbReference type="ChEBI" id="CHEBI:456216"/>
        <dbReference type="EC" id="1.18.6.1"/>
    </reaction>
</comment>
<comment type="cofactor">
    <cofactor evidence="1">
        <name>[4Fe-4S] cluster</name>
        <dbReference type="ChEBI" id="CHEBI:49883"/>
    </cofactor>
    <text evidence="1">Binds 1 [4Fe-4S] cluster per dimer.</text>
</comment>
<comment type="subunit">
    <text evidence="1">Homodimer.</text>
</comment>
<comment type="PTM">
    <text evidence="1">The reversible ADP-ribosylation of Arg-103 inactivates the nitrogenase reductase and regulates nitrogenase activity.</text>
</comment>
<comment type="similarity">
    <text evidence="1">Belongs to the NifH/BchL/ChlL family.</text>
</comment>
<keyword id="KW-0004">4Fe-4S</keyword>
<keyword id="KW-0013">ADP-ribosylation</keyword>
<keyword id="KW-0067">ATP-binding</keyword>
<keyword id="KW-0408">Iron</keyword>
<keyword id="KW-0411">Iron-sulfur</keyword>
<keyword id="KW-0479">Metal-binding</keyword>
<keyword id="KW-0535">Nitrogen fixation</keyword>
<keyword id="KW-0547">Nucleotide-binding</keyword>
<keyword id="KW-0560">Oxidoreductase</keyword>
<gene>
    <name evidence="1" type="primary">nifH</name>
    <name type="ordered locus">Lferr_1240</name>
</gene>
<evidence type="ECO:0000255" key="1">
    <source>
        <dbReference type="HAMAP-Rule" id="MF_00533"/>
    </source>
</evidence>
<feature type="chain" id="PRO_1000211851" description="Nitrogenase iron protein">
    <location>
        <begin position="1"/>
        <end position="296"/>
    </location>
</feature>
<feature type="binding site" evidence="1">
    <location>
        <begin position="12"/>
        <end position="19"/>
    </location>
    <ligand>
        <name>ATP</name>
        <dbReference type="ChEBI" id="CHEBI:30616"/>
    </ligand>
</feature>
<feature type="binding site" evidence="1">
    <location>
        <position position="100"/>
    </location>
    <ligand>
        <name>[4Fe-4S] cluster</name>
        <dbReference type="ChEBI" id="CHEBI:49883"/>
        <note>ligand shared between dimeric partners</note>
    </ligand>
</feature>
<feature type="binding site" evidence="1">
    <location>
        <position position="134"/>
    </location>
    <ligand>
        <name>[4Fe-4S] cluster</name>
        <dbReference type="ChEBI" id="CHEBI:49883"/>
        <note>ligand shared between dimeric partners</note>
    </ligand>
</feature>
<feature type="modified residue" description="ADP-ribosylarginine; by dinitrogenase reductase ADP-ribosyltransferase" evidence="1">
    <location>
        <position position="103"/>
    </location>
</feature>
<sequence length="296" mass="31745">MSDKLRQIAFYGKGGIGKSTTSQNTLAALTEMGQKILIVGCDPKADSTRLILHSKAQDTVLSLAAEAGSVEDLEIEDVMKVGYRDIRCVESGGPEPGVGCAGRGVITSINFLEENGAYDGVDYVSYDVLGDVVCGGFAMPIRENKAQEIYIVMSGEMMAMYAANNISKGILKYANSGGVRLGGLVCNERQTDKELELAEALAGKLGTKLIHFVPRDNIVQHAELRRMTVLEYAPESKQAEEYRQLAQKIHANGGNGTIPTPITMDELEEMLMEFGIMSAVDESVIGKSAAELAAAV</sequence>
<reference key="1">
    <citation type="submission" date="2008-08" db="EMBL/GenBank/DDBJ databases">
        <title>Complete sequence of Acidithiobacillus ferrooxidans ATCC 53993.</title>
        <authorList>
            <person name="Lucas S."/>
            <person name="Copeland A."/>
            <person name="Lapidus A."/>
            <person name="Glavina del Rio T."/>
            <person name="Dalin E."/>
            <person name="Tice H."/>
            <person name="Bruce D."/>
            <person name="Goodwin L."/>
            <person name="Pitluck S."/>
            <person name="Sims D."/>
            <person name="Brettin T."/>
            <person name="Detter J.C."/>
            <person name="Han C."/>
            <person name="Kuske C.R."/>
            <person name="Larimer F."/>
            <person name="Land M."/>
            <person name="Hauser L."/>
            <person name="Kyrpides N."/>
            <person name="Lykidis A."/>
            <person name="Borole A.P."/>
        </authorList>
    </citation>
    <scope>NUCLEOTIDE SEQUENCE [LARGE SCALE GENOMIC DNA]</scope>
    <source>
        <strain>ATCC 53993 / BNL-5-31</strain>
    </source>
</reference>